<organism>
    <name type="scientific">Dictyostelium discoideum</name>
    <name type="common">Social amoeba</name>
    <dbReference type="NCBI Taxonomy" id="44689"/>
    <lineage>
        <taxon>Eukaryota</taxon>
        <taxon>Amoebozoa</taxon>
        <taxon>Evosea</taxon>
        <taxon>Eumycetozoa</taxon>
        <taxon>Dictyostelia</taxon>
        <taxon>Dictyosteliales</taxon>
        <taxon>Dictyosteliaceae</taxon>
        <taxon>Dictyostelium</taxon>
    </lineage>
</organism>
<protein>
    <recommendedName>
        <fullName>Nucleolar protein 58</fullName>
    </recommendedName>
    <alternativeName>
        <fullName>Nucleolar protein 5</fullName>
    </alternativeName>
</protein>
<comment type="function">
    <text evidence="2">Involved in the biogenesis of box C/D snoRNAs. Part of the small subunit (SSU) processome, first precursor of the small eukaryotic ribosomal subunit. Could function in the small subunit (SSU) processome, first precursor of the small eukaryotic ribosomal subunit. During the assembly of the SSU processome in the nucleolus, many ribosome biogenesis factors, an RNA chaperone and ribosomal proteins associate with the nascent pre-rRNA and work in concert to generate RNA folding, modifications, rearrangements and cleavage as well as targeted degradation of pre-ribosomal RNA by the RNA exosome. As a component of box C/D small nucleolar ribonucleoprotein (snoRNP) complexes could function in methylation of ribosomal RNAs (rRNAs).</text>
</comment>
<comment type="subcellular location">
    <subcellularLocation>
        <location evidence="1">Nucleus</location>
        <location evidence="1">Nucleolus</location>
    </subcellularLocation>
</comment>
<comment type="similarity">
    <text evidence="5">Belongs to the NOP5/NOP56 family.</text>
</comment>
<keyword id="KW-0539">Nucleus</keyword>
<keyword id="KW-1185">Reference proteome</keyword>
<keyword id="KW-0690">Ribosome biogenesis</keyword>
<gene>
    <name type="primary">nop58</name>
    <name type="synonym">nol5</name>
    <name type="synonym">nop5</name>
    <name type="ORF">DDB_G0268098</name>
</gene>
<dbReference type="EMBL" id="AAFI02000003">
    <property type="protein sequence ID" value="EAL73502.1"/>
    <property type="molecule type" value="Genomic_DNA"/>
</dbReference>
<dbReference type="RefSeq" id="XP_647549.1">
    <property type="nucleotide sequence ID" value="XM_642457.1"/>
</dbReference>
<dbReference type="SMR" id="Q55FI4"/>
<dbReference type="FunCoup" id="Q55FI4">
    <property type="interactions" value="970"/>
</dbReference>
<dbReference type="STRING" id="44689.Q55FI4"/>
<dbReference type="PaxDb" id="44689-DDB0305289"/>
<dbReference type="EnsemblProtists" id="EAL73502">
    <property type="protein sequence ID" value="EAL73502"/>
    <property type="gene ID" value="DDB_G0268098"/>
</dbReference>
<dbReference type="GeneID" id="8616357"/>
<dbReference type="KEGG" id="ddi:DDB_G0268098"/>
<dbReference type="dictyBase" id="DDB_G0268098">
    <property type="gene designation" value="nop58"/>
</dbReference>
<dbReference type="VEuPathDB" id="AmoebaDB:DDB_G0268098"/>
<dbReference type="eggNOG" id="KOG2572">
    <property type="taxonomic scope" value="Eukaryota"/>
</dbReference>
<dbReference type="HOGENOM" id="CLU_015495_5_2_1"/>
<dbReference type="InParanoid" id="Q55FI4"/>
<dbReference type="OMA" id="NRMMVLA"/>
<dbReference type="PhylomeDB" id="Q55FI4"/>
<dbReference type="Reactome" id="R-DDI-4570464">
    <property type="pathway name" value="SUMOylation of RNA binding proteins"/>
</dbReference>
<dbReference type="Reactome" id="R-DDI-6791226">
    <property type="pathway name" value="Major pathway of rRNA processing in the nucleolus and cytosol"/>
</dbReference>
<dbReference type="PRO" id="PR:Q55FI4"/>
<dbReference type="Proteomes" id="UP000002195">
    <property type="component" value="Chromosome 1"/>
</dbReference>
<dbReference type="GO" id="GO:0031428">
    <property type="term" value="C:box C/D methylation guide snoRNP complex"/>
    <property type="evidence" value="ECO:0000318"/>
    <property type="project" value="GO_Central"/>
</dbReference>
<dbReference type="GO" id="GO:0005730">
    <property type="term" value="C:nucleolus"/>
    <property type="evidence" value="ECO:0007669"/>
    <property type="project" value="UniProtKB-SubCell"/>
</dbReference>
<dbReference type="GO" id="GO:0032040">
    <property type="term" value="C:small-subunit processome"/>
    <property type="evidence" value="ECO:0000318"/>
    <property type="project" value="GO_Central"/>
</dbReference>
<dbReference type="GO" id="GO:0030515">
    <property type="term" value="F:snoRNA binding"/>
    <property type="evidence" value="ECO:0000318"/>
    <property type="project" value="GO_Central"/>
</dbReference>
<dbReference type="GO" id="GO:0042254">
    <property type="term" value="P:ribosome biogenesis"/>
    <property type="evidence" value="ECO:0007669"/>
    <property type="project" value="UniProtKB-KW"/>
</dbReference>
<dbReference type="FunFam" id="1.10.246.90:FF:000005">
    <property type="entry name" value="Nucleolar protein 5, putative"/>
    <property type="match status" value="1"/>
</dbReference>
<dbReference type="FunFam" id="1.10.287.4070:FF:000001">
    <property type="entry name" value="Probable Nucleolar protein 58"/>
    <property type="match status" value="1"/>
</dbReference>
<dbReference type="Gene3D" id="1.10.287.4070">
    <property type="match status" value="1"/>
</dbReference>
<dbReference type="Gene3D" id="1.10.246.90">
    <property type="entry name" value="Nop domain"/>
    <property type="match status" value="1"/>
</dbReference>
<dbReference type="InterPro" id="IPR045056">
    <property type="entry name" value="Nop56/Nop58"/>
</dbReference>
<dbReference type="InterPro" id="IPR012974">
    <property type="entry name" value="NOP58/56_N"/>
</dbReference>
<dbReference type="InterPro" id="IPR042239">
    <property type="entry name" value="Nop_C"/>
</dbReference>
<dbReference type="InterPro" id="IPR002687">
    <property type="entry name" value="Nop_dom"/>
</dbReference>
<dbReference type="InterPro" id="IPR036070">
    <property type="entry name" value="Nop_dom_sf"/>
</dbReference>
<dbReference type="InterPro" id="IPR012976">
    <property type="entry name" value="NOSIC"/>
</dbReference>
<dbReference type="PANTHER" id="PTHR10894">
    <property type="entry name" value="NUCLEOLAR PROTEIN 5 NUCLEOLAR PROTEIN NOP5 NOP58"/>
    <property type="match status" value="1"/>
</dbReference>
<dbReference type="PANTHER" id="PTHR10894:SF1">
    <property type="entry name" value="NUCLEOLAR PROTEIN 58"/>
    <property type="match status" value="1"/>
</dbReference>
<dbReference type="Pfam" id="PF01798">
    <property type="entry name" value="Nop"/>
    <property type="match status" value="1"/>
</dbReference>
<dbReference type="Pfam" id="PF08156">
    <property type="entry name" value="NOP5NT"/>
    <property type="match status" value="1"/>
</dbReference>
<dbReference type="SMART" id="SM00931">
    <property type="entry name" value="NOSIC"/>
    <property type="match status" value="1"/>
</dbReference>
<dbReference type="SUPFAM" id="SSF89124">
    <property type="entry name" value="Nop domain"/>
    <property type="match status" value="1"/>
</dbReference>
<dbReference type="PROSITE" id="PS51358">
    <property type="entry name" value="NOP"/>
    <property type="match status" value="1"/>
</dbReference>
<evidence type="ECO:0000250" key="1"/>
<evidence type="ECO:0000250" key="2">
    <source>
        <dbReference type="UniProtKB" id="Q9Y2X3"/>
    </source>
</evidence>
<evidence type="ECO:0000255" key="3">
    <source>
        <dbReference type="PROSITE-ProRule" id="PRU00690"/>
    </source>
</evidence>
<evidence type="ECO:0000256" key="4">
    <source>
        <dbReference type="SAM" id="MobiDB-lite"/>
    </source>
</evidence>
<evidence type="ECO:0000305" key="5"/>
<feature type="chain" id="PRO_0000331207" description="Nucleolar protein 58">
    <location>
        <begin position="1"/>
        <end position="638"/>
    </location>
</feature>
<feature type="domain" description="Nop" evidence="3">
    <location>
        <begin position="284"/>
        <end position="402"/>
    </location>
</feature>
<feature type="region of interest" description="Disordered" evidence="4">
    <location>
        <begin position="416"/>
        <end position="638"/>
    </location>
</feature>
<feature type="compositionally biased region" description="Basic and acidic residues" evidence="4">
    <location>
        <begin position="437"/>
        <end position="458"/>
    </location>
</feature>
<feature type="compositionally biased region" description="Basic and acidic residues" evidence="4">
    <location>
        <begin position="485"/>
        <end position="521"/>
    </location>
</feature>
<feature type="compositionally biased region" description="Basic and acidic residues" evidence="4">
    <location>
        <begin position="527"/>
        <end position="574"/>
    </location>
</feature>
<feature type="compositionally biased region" description="Basic and acidic residues" evidence="4">
    <location>
        <begin position="580"/>
        <end position="632"/>
    </location>
</feature>
<accession>Q55FI4</accession>
<proteinExistence type="inferred from homology"/>
<name>NOP58_DICDI</name>
<sequence length="638" mass="72336">MLVLFETSAGFALFKVLDEGKMKSKPVDINNFFETPEKASSFVSLKKFYKFDGTLDALEAQTAIAECKVPESLSNFLKKNVVSEKLNEQLIVSDSKFGNAIKDALNIKVLCDDTTQELIRGIRLQLKSLVNANEQDLNAMSIGLSHSYSRYKLKFSPDKVDTMIVQAISLLDDLTTEINIYAMRAREWYGWHFPELGKLITNHTQYANAIKAMGNRKSAVDTDFTDILPEEVAEEVKEAAQISMGTEISPEDLDHIFALCDQFLSIQAYHTELTEYLKSRMEAIAPNLTILVGEIVGARLICRAGSLMNLAKYPASTIQILGAEKALFRALKTKHNTPKYGLIYNAKIVGEASLKNKGKMSRVLAAKAALSARFDALCEVSDTSYGIAYKGAVDRRAAAIEGREVRKSLNAVKPEKSGNVAKYDHTKSATTNTTRDVATKSSKESSIKQEKQDVKMEEASSSDSDSSSDSDSSEEEKSKKSKKSKKEETPVAKEEKKEKKSKKEETPVAKEEKKEKEEKKEKKDKKEKKEEKEDKKEEKKEKKDKKEKTEETPVAKEEKKEKKEKKEEKEEKKDKKEKKEKKEEKEEKKEKKEKKSSSKEDKKEKEEKKEKKSSSKEDKKRKDRDEEPEEKKSKKSKK</sequence>
<reference key="1">
    <citation type="journal article" date="2005" name="Nature">
        <title>The genome of the social amoeba Dictyostelium discoideum.</title>
        <authorList>
            <person name="Eichinger L."/>
            <person name="Pachebat J.A."/>
            <person name="Gloeckner G."/>
            <person name="Rajandream M.A."/>
            <person name="Sucgang R."/>
            <person name="Berriman M."/>
            <person name="Song J."/>
            <person name="Olsen R."/>
            <person name="Szafranski K."/>
            <person name="Xu Q."/>
            <person name="Tunggal B."/>
            <person name="Kummerfeld S."/>
            <person name="Madera M."/>
            <person name="Konfortov B.A."/>
            <person name="Rivero F."/>
            <person name="Bankier A.T."/>
            <person name="Lehmann R."/>
            <person name="Hamlin N."/>
            <person name="Davies R."/>
            <person name="Gaudet P."/>
            <person name="Fey P."/>
            <person name="Pilcher K."/>
            <person name="Chen G."/>
            <person name="Saunders D."/>
            <person name="Sodergren E.J."/>
            <person name="Davis P."/>
            <person name="Kerhornou A."/>
            <person name="Nie X."/>
            <person name="Hall N."/>
            <person name="Anjard C."/>
            <person name="Hemphill L."/>
            <person name="Bason N."/>
            <person name="Farbrother P."/>
            <person name="Desany B."/>
            <person name="Just E."/>
            <person name="Morio T."/>
            <person name="Rost R."/>
            <person name="Churcher C.M."/>
            <person name="Cooper J."/>
            <person name="Haydock S."/>
            <person name="van Driessche N."/>
            <person name="Cronin A."/>
            <person name="Goodhead I."/>
            <person name="Muzny D.M."/>
            <person name="Mourier T."/>
            <person name="Pain A."/>
            <person name="Lu M."/>
            <person name="Harper D."/>
            <person name="Lindsay R."/>
            <person name="Hauser H."/>
            <person name="James K.D."/>
            <person name="Quiles M."/>
            <person name="Madan Babu M."/>
            <person name="Saito T."/>
            <person name="Buchrieser C."/>
            <person name="Wardroper A."/>
            <person name="Felder M."/>
            <person name="Thangavelu M."/>
            <person name="Johnson D."/>
            <person name="Knights A."/>
            <person name="Loulseged H."/>
            <person name="Mungall K.L."/>
            <person name="Oliver K."/>
            <person name="Price C."/>
            <person name="Quail M.A."/>
            <person name="Urushihara H."/>
            <person name="Hernandez J."/>
            <person name="Rabbinowitsch E."/>
            <person name="Steffen D."/>
            <person name="Sanders M."/>
            <person name="Ma J."/>
            <person name="Kohara Y."/>
            <person name="Sharp S."/>
            <person name="Simmonds M.N."/>
            <person name="Spiegler S."/>
            <person name="Tivey A."/>
            <person name="Sugano S."/>
            <person name="White B."/>
            <person name="Walker D."/>
            <person name="Woodward J.R."/>
            <person name="Winckler T."/>
            <person name="Tanaka Y."/>
            <person name="Shaulsky G."/>
            <person name="Schleicher M."/>
            <person name="Weinstock G.M."/>
            <person name="Rosenthal A."/>
            <person name="Cox E.C."/>
            <person name="Chisholm R.L."/>
            <person name="Gibbs R.A."/>
            <person name="Loomis W.F."/>
            <person name="Platzer M."/>
            <person name="Kay R.R."/>
            <person name="Williams J.G."/>
            <person name="Dear P.H."/>
            <person name="Noegel A.A."/>
            <person name="Barrell B.G."/>
            <person name="Kuspa A."/>
        </authorList>
    </citation>
    <scope>NUCLEOTIDE SEQUENCE [LARGE SCALE GENOMIC DNA]</scope>
    <source>
        <strain>AX4</strain>
    </source>
</reference>